<accession>Q6NKX1</accession>
<accession>Q9FKR5</accession>
<proteinExistence type="evidence at protein level"/>
<gene>
    <name type="primary">POX2</name>
    <name evidence="5" type="synonym">PRODH2</name>
    <name type="ordered locus">At5g38710</name>
    <name type="ORF">MKD10.10</name>
</gene>
<organism>
    <name type="scientific">Arabidopsis thaliana</name>
    <name type="common">Mouse-ear cress</name>
    <dbReference type="NCBI Taxonomy" id="3702"/>
    <lineage>
        <taxon>Eukaryota</taxon>
        <taxon>Viridiplantae</taxon>
        <taxon>Streptophyta</taxon>
        <taxon>Embryophyta</taxon>
        <taxon>Tracheophyta</taxon>
        <taxon>Spermatophyta</taxon>
        <taxon>Magnoliopsida</taxon>
        <taxon>eudicotyledons</taxon>
        <taxon>Gunneridae</taxon>
        <taxon>Pentapetalae</taxon>
        <taxon>rosids</taxon>
        <taxon>malvids</taxon>
        <taxon>Brassicales</taxon>
        <taxon>Brassicaceae</taxon>
        <taxon>Camelineae</taxon>
        <taxon>Arabidopsis</taxon>
    </lineage>
</organism>
<evidence type="ECO:0000255" key="1"/>
<evidence type="ECO:0000269" key="2">
    <source>
    </source>
</evidence>
<evidence type="ECO:0000269" key="3">
    <source>
    </source>
</evidence>
<evidence type="ECO:0000269" key="4">
    <source>
    </source>
</evidence>
<evidence type="ECO:0000303" key="5">
    <source>
    </source>
</evidence>
<evidence type="ECO:0000305" key="6"/>
<evidence type="ECO:0000305" key="7">
    <source>
    </source>
</evidence>
<protein>
    <recommendedName>
        <fullName evidence="5">Proline dehydrogenase 2, mitochondrial</fullName>
        <ecNumber evidence="7">1.5.5.2</ecNumber>
    </recommendedName>
    <alternativeName>
        <fullName>Osmotic stress-induced proline dehydrogenase</fullName>
    </alternativeName>
    <alternativeName>
        <fullName>Proline oxidase</fullName>
    </alternativeName>
</protein>
<dbReference type="EC" id="1.5.5.2" evidence="7"/>
<dbReference type="EMBL" id="AB011478">
    <property type="protein sequence ID" value="BAB10129.1"/>
    <property type="status" value="ALT_SEQ"/>
    <property type="molecule type" value="Genomic_DNA"/>
</dbReference>
<dbReference type="EMBL" id="CP002688">
    <property type="protein sequence ID" value="AED94352.1"/>
    <property type="molecule type" value="Genomic_DNA"/>
</dbReference>
<dbReference type="EMBL" id="BT012572">
    <property type="protein sequence ID" value="AAS99716.1"/>
    <property type="molecule type" value="mRNA"/>
</dbReference>
<dbReference type="EMBL" id="AK221601">
    <property type="protein sequence ID" value="BAD95150.1"/>
    <property type="molecule type" value="mRNA"/>
</dbReference>
<dbReference type="RefSeq" id="NP_198687.1">
    <property type="nucleotide sequence ID" value="NM_123232.3"/>
</dbReference>
<dbReference type="SMR" id="Q6NKX1"/>
<dbReference type="FunCoup" id="Q6NKX1">
    <property type="interactions" value="1146"/>
</dbReference>
<dbReference type="STRING" id="3702.Q6NKX1"/>
<dbReference type="iPTMnet" id="Q6NKX1"/>
<dbReference type="PaxDb" id="3702-AT5G38710.1"/>
<dbReference type="EnsemblPlants" id="AT5G38710.1">
    <property type="protein sequence ID" value="AT5G38710.1"/>
    <property type="gene ID" value="AT5G38710"/>
</dbReference>
<dbReference type="GeneID" id="833862"/>
<dbReference type="Gramene" id="AT5G38710.1">
    <property type="protein sequence ID" value="AT5G38710.1"/>
    <property type="gene ID" value="AT5G38710"/>
</dbReference>
<dbReference type="KEGG" id="ath:AT5G38710"/>
<dbReference type="Araport" id="AT5G38710"/>
<dbReference type="TAIR" id="AT5G38710">
    <property type="gene designation" value="PDH2"/>
</dbReference>
<dbReference type="eggNOG" id="KOG0186">
    <property type="taxonomic scope" value="Eukaryota"/>
</dbReference>
<dbReference type="HOGENOM" id="CLU_018202_3_0_1"/>
<dbReference type="InParanoid" id="Q6NKX1"/>
<dbReference type="OMA" id="QFCAGEK"/>
<dbReference type="PhylomeDB" id="Q6NKX1"/>
<dbReference type="BioCyc" id="ARA:AT5G38710-MONOMER"/>
<dbReference type="BioCyc" id="MetaCyc:AT5G38710-MONOMER"/>
<dbReference type="BRENDA" id="1.5.99.B2">
    <property type="organism ID" value="399"/>
</dbReference>
<dbReference type="UniPathway" id="UPA00261">
    <property type="reaction ID" value="UER00373"/>
</dbReference>
<dbReference type="PRO" id="PR:Q6NKX1"/>
<dbReference type="Proteomes" id="UP000006548">
    <property type="component" value="Chromosome 5"/>
</dbReference>
<dbReference type="ExpressionAtlas" id="Q6NKX1">
    <property type="expression patterns" value="baseline and differential"/>
</dbReference>
<dbReference type="GO" id="GO:0005739">
    <property type="term" value="C:mitochondrion"/>
    <property type="evidence" value="ECO:0000314"/>
    <property type="project" value="UniProtKB"/>
</dbReference>
<dbReference type="GO" id="GO:0004657">
    <property type="term" value="F:proline dehydrogenase activity"/>
    <property type="evidence" value="ECO:0000316"/>
    <property type="project" value="UniProtKB"/>
</dbReference>
<dbReference type="GO" id="GO:0006562">
    <property type="term" value="P:proline catabolic process"/>
    <property type="evidence" value="ECO:0000316"/>
    <property type="project" value="UniProtKB"/>
</dbReference>
<dbReference type="GO" id="GO:0010133">
    <property type="term" value="P:proline catabolic process to glutamate"/>
    <property type="evidence" value="ECO:0007669"/>
    <property type="project" value="UniProtKB-UniPathway"/>
</dbReference>
<dbReference type="GO" id="GO:0006970">
    <property type="term" value="P:response to osmotic stress"/>
    <property type="evidence" value="ECO:0000270"/>
    <property type="project" value="UniProtKB"/>
</dbReference>
<dbReference type="GO" id="GO:0009414">
    <property type="term" value="P:response to water deprivation"/>
    <property type="evidence" value="ECO:0000270"/>
    <property type="project" value="UniProtKB"/>
</dbReference>
<dbReference type="Gene3D" id="3.20.20.220">
    <property type="match status" value="1"/>
</dbReference>
<dbReference type="InterPro" id="IPR029041">
    <property type="entry name" value="FAD-linked_oxidoreductase-like"/>
</dbReference>
<dbReference type="InterPro" id="IPR002872">
    <property type="entry name" value="Proline_DH_dom"/>
</dbReference>
<dbReference type="InterPro" id="IPR015659">
    <property type="entry name" value="Proline_oxidase"/>
</dbReference>
<dbReference type="PANTHER" id="PTHR13914:SF31">
    <property type="entry name" value="PROLINE DEHYDROGENASE 2, MITOCHONDRIAL"/>
    <property type="match status" value="1"/>
</dbReference>
<dbReference type="PANTHER" id="PTHR13914">
    <property type="entry name" value="PROLINE OXIDASE"/>
    <property type="match status" value="1"/>
</dbReference>
<dbReference type="Pfam" id="PF01619">
    <property type="entry name" value="Pro_dh"/>
    <property type="match status" value="1"/>
</dbReference>
<dbReference type="SUPFAM" id="SSF51730">
    <property type="entry name" value="FAD-linked oxidoreductase"/>
    <property type="match status" value="1"/>
</dbReference>
<comment type="function">
    <text evidence="7">Converts proline to delta-1-pyrroline-5-carboxylate.</text>
</comment>
<comment type="catalytic activity">
    <reaction evidence="7">
        <text>L-proline + a quinone = (S)-1-pyrroline-5-carboxylate + a quinol + H(+)</text>
        <dbReference type="Rhea" id="RHEA:23784"/>
        <dbReference type="ChEBI" id="CHEBI:15378"/>
        <dbReference type="ChEBI" id="CHEBI:17388"/>
        <dbReference type="ChEBI" id="CHEBI:24646"/>
        <dbReference type="ChEBI" id="CHEBI:60039"/>
        <dbReference type="ChEBI" id="CHEBI:132124"/>
        <dbReference type="EC" id="1.5.5.2"/>
    </reaction>
    <physiologicalReaction direction="left-to-right" evidence="7">
        <dbReference type="Rhea" id="RHEA:23785"/>
    </physiologicalReaction>
</comment>
<comment type="cofactor">
    <cofactor>
        <name>FAD</name>
        <dbReference type="ChEBI" id="CHEBI:57692"/>
    </cofactor>
</comment>
<comment type="pathway">
    <text>Amino-acid degradation; L-proline degradation into L-glutamate; L-glutamate from L-proline: step 1/2.</text>
</comment>
<comment type="subcellular location">
    <subcellularLocation>
        <location evidence="4">Mitochondrion</location>
    </subcellularLocation>
</comment>
<comment type="tissue specificity">
    <text evidence="4">Expressed in the vascular tissue and in the abscission zone of petals, sepals, stamina, pistils and siliques. Not detected in petioles.</text>
</comment>
<comment type="developmental stage">
    <text evidence="4">Strongly expressed in senescent leaves.</text>
</comment>
<comment type="induction">
    <text evidence="2 3 4">Down-regulated by high succrose; via the repression of bZIP11. Up-regulated by proline and salt or drought stress.</text>
</comment>
<comment type="disruption phenotype">
    <text evidence="4">No visible phenotype when grown under normal conditions. No proline hypersensitivity.</text>
</comment>
<comment type="similarity">
    <text evidence="6">Belongs to the proline oxidase family.</text>
</comment>
<comment type="sequence caution" evidence="6">
    <conflict type="erroneous gene model prediction">
        <sequence resource="EMBL-CDS" id="BAB10129"/>
    </conflict>
</comment>
<feature type="transit peptide" description="Mitochondrion" evidence="1">
    <location>
        <begin position="1"/>
        <end position="29"/>
    </location>
</feature>
<feature type="chain" id="PRO_0000394797" description="Proline dehydrogenase 2, mitochondrial">
    <location>
        <begin position="30"/>
        <end position="476"/>
    </location>
</feature>
<sequence>MANRFLRPNLIHRFSTVSPVGPPTTIIPEILSFDQPKPEVDLDLSDQARLFASVPISTLLRSTAILHATSIGPMVDLGSWLMSSKLMDTTVTRDLVLRIVKGTFYDHFCAGEDAAAAARRVSSVYESTGLKGMLVYGVEHAEDGGACDENIQKFIETVEAAKTLPSSHLSSVVVKITAICPMNVLKRVSDLLRWQYKNPNFKLPWKLNSFPVFSGLSPLYHTTSEPEPLTVEEERELEKAHERLKSVCLRCQESNVPLLIDAEDTILQPAIDYMAYWSAIMFNSDKDRPIVYNTIQAYLKDAGERLHLALRESEKMNVPIGFKLVRGAYMSSEAKLADSLGYKSPVHDTIQNTHDCYNDCMSFLMEKASNGSGIAVILATHNTDSGKLGARKASELGINKENGKIEFAQLYGMSDALSFGLKRAGFNVSKYMPYGPVDTAIPYLIRRAYENRGMMSTGALDRQLMRKELKRRVMAW</sequence>
<keyword id="KW-0274">FAD</keyword>
<keyword id="KW-0285">Flavoprotein</keyword>
<keyword id="KW-0496">Mitochondrion</keyword>
<keyword id="KW-0560">Oxidoreductase</keyword>
<keyword id="KW-0642">Proline metabolism</keyword>
<keyword id="KW-1185">Reference proteome</keyword>
<keyword id="KW-0346">Stress response</keyword>
<keyword id="KW-0809">Transit peptide</keyword>
<name>PROD2_ARATH</name>
<reference key="1">
    <citation type="journal article" date="1998" name="DNA Res.">
        <title>Structural analysis of Arabidopsis thaliana chromosome 5. V. Sequence features of the regions of 1,381,565 bp covered by twenty one physically assigned P1 and TAC clones.</title>
        <authorList>
            <person name="Kaneko T."/>
            <person name="Kotani H."/>
            <person name="Nakamura Y."/>
            <person name="Sato S."/>
            <person name="Asamizu E."/>
            <person name="Miyajima N."/>
            <person name="Tabata S."/>
        </authorList>
    </citation>
    <scope>NUCLEOTIDE SEQUENCE [LARGE SCALE GENOMIC DNA]</scope>
    <source>
        <strain>cv. Columbia</strain>
    </source>
</reference>
<reference key="2">
    <citation type="journal article" date="2017" name="Plant J.">
        <title>Araport11: a complete reannotation of the Arabidopsis thaliana reference genome.</title>
        <authorList>
            <person name="Cheng C.Y."/>
            <person name="Krishnakumar V."/>
            <person name="Chan A.P."/>
            <person name="Thibaud-Nissen F."/>
            <person name="Schobel S."/>
            <person name="Town C.D."/>
        </authorList>
    </citation>
    <scope>GENOME REANNOTATION</scope>
    <source>
        <strain>cv. Columbia</strain>
    </source>
</reference>
<reference key="3">
    <citation type="submission" date="2004-04" db="EMBL/GenBank/DDBJ databases">
        <title>Arabidopsis ORF clones.</title>
        <authorList>
            <person name="Shinn P."/>
            <person name="Chen H."/>
            <person name="Cheuk R."/>
            <person name="Kim C.J."/>
            <person name="Carninci P."/>
            <person name="Hayashizaki Y."/>
            <person name="Ishida J."/>
            <person name="Kamiya A."/>
            <person name="Kawai J."/>
            <person name="Narusaka M."/>
            <person name="Sakurai T."/>
            <person name="Satou M."/>
            <person name="Seki M."/>
            <person name="Shinozaki K."/>
            <person name="Ecker J.R."/>
        </authorList>
    </citation>
    <scope>NUCLEOTIDE SEQUENCE [LARGE SCALE MRNA]</scope>
    <source>
        <strain>cv. Columbia</strain>
    </source>
</reference>
<reference key="4">
    <citation type="submission" date="2005-03" db="EMBL/GenBank/DDBJ databases">
        <title>Large-scale analysis of RIKEN Arabidopsis full-length (RAFL) cDNAs.</title>
        <authorList>
            <person name="Totoki Y."/>
            <person name="Seki M."/>
            <person name="Ishida J."/>
            <person name="Nakajima M."/>
            <person name="Enju A."/>
            <person name="Kamiya A."/>
            <person name="Narusaka M."/>
            <person name="Shin-i T."/>
            <person name="Nakagawa M."/>
            <person name="Sakamoto N."/>
            <person name="Oishi K."/>
            <person name="Kohara Y."/>
            <person name="Kobayashi M."/>
            <person name="Toyoda A."/>
            <person name="Sakaki Y."/>
            <person name="Sakurai T."/>
            <person name="Iida K."/>
            <person name="Akiyama K."/>
            <person name="Satou M."/>
            <person name="Toyoda T."/>
            <person name="Konagaya A."/>
            <person name="Carninci P."/>
            <person name="Kawai J."/>
            <person name="Hayashizaki Y."/>
            <person name="Shinozaki K."/>
        </authorList>
    </citation>
    <scope>NUCLEOTIDE SEQUENCE [LARGE SCALE MRNA]</scope>
    <source>
        <strain>cv. Columbia</strain>
    </source>
</reference>
<reference key="5">
    <citation type="journal article" date="2007" name="Planta">
        <title>Two tobacco proline dehydrogenases are differentially regulated and play a role in early plant development.</title>
        <authorList>
            <person name="Ribarits A."/>
            <person name="Abdullaev A."/>
            <person name="Tashpulatov A."/>
            <person name="Richter A."/>
            <person name="Heberle-Bors E."/>
            <person name="Touraev A."/>
        </authorList>
    </citation>
    <scope>INDUCTION</scope>
</reference>
<reference key="6">
    <citation type="journal article" date="2008" name="Plant J.">
        <title>The sucrose regulated transcription factor bZIP11 affects amino acid metabolism by regulating the expression of ASPARAGINE SYNTHETASE1 and PROLINE DEHYDROGENASE2.</title>
        <authorList>
            <person name="Hanson J."/>
            <person name="Hanssen M."/>
            <person name="Wiese A."/>
            <person name="Hendriks M.M."/>
            <person name="Smeekens S."/>
        </authorList>
    </citation>
    <scope>INDUCTION</scope>
</reference>
<reference key="7">
    <citation type="journal article" date="2010" name="BMC Plant Biol.">
        <title>Non-redundant functions of two proline dehydrogenase isoforms in Arabidopsis.</title>
        <authorList>
            <person name="Funck D."/>
            <person name="Eckard S."/>
            <person name="Mueller G."/>
        </authorList>
    </citation>
    <scope>FUNCTION</scope>
    <scope>CATALYTIC ACTIVITY</scope>
    <scope>SUBCELLULAR LOCATION</scope>
    <scope>TISSUE SPECIFICITY</scope>
    <scope>DEVELOPMENTAL STAGE</scope>
    <scope>INDUCTION</scope>
    <scope>DISRUPTION PHENOTYPE</scope>
</reference>